<comment type="function">
    <text>This protein is a positive regulator of gene expression of beta-lactamase (AmpC).</text>
</comment>
<comment type="subcellular location">
    <subcellularLocation>
        <location>Cytoplasm</location>
    </subcellularLocation>
</comment>
<comment type="similarity">
    <text evidence="2">Belongs to the LysR transcriptional regulatory family.</text>
</comment>
<protein>
    <recommendedName>
        <fullName>HTH-type transcriptional activator AmpR</fullName>
    </recommendedName>
</protein>
<name>AMPR_CITKO</name>
<reference key="1">
    <citation type="journal article" date="1994" name="J. Med. Microbiol.">
        <title>Heterogeneity at the beta-lactamase structural gene ampC amongst Citrobacter spp. assessed by polymerase chain reaction analysis: potential for typing at a molecular level.</title>
        <authorList>
            <person name="Jones M.E."/>
            <person name="Avison M.B."/>
            <person name="Damdinsuren E."/>
            <person name="Macgowan A.P."/>
            <person name="Bennett P.M."/>
        </authorList>
    </citation>
    <scope>NUCLEOTIDE SEQUENCE [GENOMIC DNA]</scope>
    <source>
        <strain>ULA-27</strain>
    </source>
</reference>
<organism>
    <name type="scientific">Citrobacter koseri</name>
    <name type="common">Citrobacter diversus</name>
    <dbReference type="NCBI Taxonomy" id="545"/>
    <lineage>
        <taxon>Bacteria</taxon>
        <taxon>Pseudomonadati</taxon>
        <taxon>Pseudomonadota</taxon>
        <taxon>Gammaproteobacteria</taxon>
        <taxon>Enterobacterales</taxon>
        <taxon>Enterobacteriaceae</taxon>
        <taxon>Citrobacter</taxon>
    </lineage>
</organism>
<gene>
    <name type="primary">ampR</name>
</gene>
<sequence>MRSNLPLNALRAFEASARHLSFTRAALELCVTQAAVSQQVRILEDRLNRVLFKRLPRGLEMTDEAQALFAVLTDAFGQIDTIFRQFEGGEYREVLTVAAVGTFAVGWLLPRIEQFRQAHPFVELRLRTNNNVVNLAAEGLDFAIRFGNGLWPATHNEMLFEAPLTVLCTPETAQRLRRPADLLQENLLRSYRVDEWDNWFAAAGVTAERINGAVFDSSRLMVETVIHTGGAALVPAVMFARELAAGQLVRPFDIEIQMGYWLTHLKSKPMTPAMEIFRDWIVKMA</sequence>
<evidence type="ECO:0000255" key="1">
    <source>
        <dbReference type="PROSITE-ProRule" id="PRU00253"/>
    </source>
</evidence>
<evidence type="ECO:0000305" key="2"/>
<accession>P52658</accession>
<proteinExistence type="inferred from homology"/>
<feature type="chain" id="PRO_0000105585" description="HTH-type transcriptional activator AmpR">
    <location>
        <begin position="1"/>
        <end position="285"/>
    </location>
</feature>
<feature type="domain" description="HTH lysR-type" evidence="1">
    <location>
        <begin position="5"/>
        <end position="62"/>
    </location>
</feature>
<feature type="DNA-binding region" description="H-T-H motif" evidence="1">
    <location>
        <begin position="22"/>
        <end position="41"/>
    </location>
</feature>
<dbReference type="EMBL" id="X77656">
    <property type="protein sequence ID" value="CAA54736.1"/>
    <property type="molecule type" value="Genomic_DNA"/>
</dbReference>
<dbReference type="SMR" id="P52658"/>
<dbReference type="GO" id="GO:0005737">
    <property type="term" value="C:cytoplasm"/>
    <property type="evidence" value="ECO:0007669"/>
    <property type="project" value="UniProtKB-SubCell"/>
</dbReference>
<dbReference type="GO" id="GO:0003700">
    <property type="term" value="F:DNA-binding transcription factor activity"/>
    <property type="evidence" value="ECO:0007669"/>
    <property type="project" value="InterPro"/>
</dbReference>
<dbReference type="GO" id="GO:0043565">
    <property type="term" value="F:sequence-specific DNA binding"/>
    <property type="evidence" value="ECO:0007669"/>
    <property type="project" value="TreeGrafter"/>
</dbReference>
<dbReference type="GO" id="GO:0006351">
    <property type="term" value="P:DNA-templated transcription"/>
    <property type="evidence" value="ECO:0007669"/>
    <property type="project" value="TreeGrafter"/>
</dbReference>
<dbReference type="FunFam" id="1.10.10.10:FF:000038">
    <property type="entry name" value="Glycine cleavage system transcriptional activator"/>
    <property type="match status" value="1"/>
</dbReference>
<dbReference type="Gene3D" id="3.40.190.10">
    <property type="entry name" value="Periplasmic binding protein-like II"/>
    <property type="match status" value="2"/>
</dbReference>
<dbReference type="Gene3D" id="1.10.10.10">
    <property type="entry name" value="Winged helix-like DNA-binding domain superfamily/Winged helix DNA-binding domain"/>
    <property type="match status" value="1"/>
</dbReference>
<dbReference type="InterPro" id="IPR005119">
    <property type="entry name" value="LysR_subst-bd"/>
</dbReference>
<dbReference type="InterPro" id="IPR000847">
    <property type="entry name" value="Tscrpt_reg_HTH_LysR"/>
</dbReference>
<dbReference type="InterPro" id="IPR036388">
    <property type="entry name" value="WH-like_DNA-bd_sf"/>
</dbReference>
<dbReference type="InterPro" id="IPR036390">
    <property type="entry name" value="WH_DNA-bd_sf"/>
</dbReference>
<dbReference type="PANTHER" id="PTHR30537:SF70">
    <property type="entry name" value="HTH-TYPE TRANSCRIPTIONAL ACTIVATOR AMPR"/>
    <property type="match status" value="1"/>
</dbReference>
<dbReference type="PANTHER" id="PTHR30537">
    <property type="entry name" value="HTH-TYPE TRANSCRIPTIONAL REGULATOR"/>
    <property type="match status" value="1"/>
</dbReference>
<dbReference type="Pfam" id="PF00126">
    <property type="entry name" value="HTH_1"/>
    <property type="match status" value="1"/>
</dbReference>
<dbReference type="Pfam" id="PF03466">
    <property type="entry name" value="LysR_substrate"/>
    <property type="match status" value="1"/>
</dbReference>
<dbReference type="PRINTS" id="PR00039">
    <property type="entry name" value="HTHLYSR"/>
</dbReference>
<dbReference type="SUPFAM" id="SSF53850">
    <property type="entry name" value="Periplasmic binding protein-like II"/>
    <property type="match status" value="1"/>
</dbReference>
<dbReference type="SUPFAM" id="SSF46785">
    <property type="entry name" value="Winged helix' DNA-binding domain"/>
    <property type="match status" value="1"/>
</dbReference>
<dbReference type="PROSITE" id="PS50931">
    <property type="entry name" value="HTH_LYSR"/>
    <property type="match status" value="1"/>
</dbReference>
<keyword id="KW-0010">Activator</keyword>
<keyword id="KW-0963">Cytoplasm</keyword>
<keyword id="KW-0238">DNA-binding</keyword>
<keyword id="KW-0804">Transcription</keyword>
<keyword id="KW-0805">Transcription regulation</keyword>